<organism>
    <name type="scientific">Shewanella sp. (strain ANA-3)</name>
    <dbReference type="NCBI Taxonomy" id="94122"/>
    <lineage>
        <taxon>Bacteria</taxon>
        <taxon>Pseudomonadati</taxon>
        <taxon>Pseudomonadota</taxon>
        <taxon>Gammaproteobacteria</taxon>
        <taxon>Alteromonadales</taxon>
        <taxon>Shewanellaceae</taxon>
        <taxon>Shewanella</taxon>
    </lineage>
</organism>
<accession>A0KWX7</accession>
<reference key="1">
    <citation type="submission" date="2006-09" db="EMBL/GenBank/DDBJ databases">
        <title>Complete sequence of chromosome 1 of Shewanella sp. ANA-3.</title>
        <authorList>
            <person name="Copeland A."/>
            <person name="Lucas S."/>
            <person name="Lapidus A."/>
            <person name="Barry K."/>
            <person name="Detter J.C."/>
            <person name="Glavina del Rio T."/>
            <person name="Hammon N."/>
            <person name="Israni S."/>
            <person name="Dalin E."/>
            <person name="Tice H."/>
            <person name="Pitluck S."/>
            <person name="Chertkov O."/>
            <person name="Brettin T."/>
            <person name="Bruce D."/>
            <person name="Han C."/>
            <person name="Tapia R."/>
            <person name="Gilna P."/>
            <person name="Schmutz J."/>
            <person name="Larimer F."/>
            <person name="Land M."/>
            <person name="Hauser L."/>
            <person name="Kyrpides N."/>
            <person name="Kim E."/>
            <person name="Newman D."/>
            <person name="Salticov C."/>
            <person name="Konstantinidis K."/>
            <person name="Klappenback J."/>
            <person name="Tiedje J."/>
            <person name="Richardson P."/>
        </authorList>
    </citation>
    <scope>NUCLEOTIDE SEQUENCE [LARGE SCALE GENOMIC DNA]</scope>
    <source>
        <strain>ANA-3</strain>
    </source>
</reference>
<protein>
    <recommendedName>
        <fullName evidence="1">L-arabinose isomerase</fullName>
        <ecNumber evidence="1">5.3.1.4</ecNumber>
    </recommendedName>
</protein>
<gene>
    <name evidence="1" type="primary">araA</name>
    <name type="ordered locus">Shewana3_2066</name>
</gene>
<dbReference type="EC" id="5.3.1.4" evidence="1"/>
<dbReference type="EMBL" id="CP000469">
    <property type="protein sequence ID" value="ABK48296.1"/>
    <property type="molecule type" value="Genomic_DNA"/>
</dbReference>
<dbReference type="RefSeq" id="WP_011717043.1">
    <property type="nucleotide sequence ID" value="NC_008577.1"/>
</dbReference>
<dbReference type="SMR" id="A0KWX7"/>
<dbReference type="STRING" id="94122.Shewana3_2066"/>
<dbReference type="KEGG" id="shn:Shewana3_2066"/>
<dbReference type="eggNOG" id="COG2160">
    <property type="taxonomic scope" value="Bacteria"/>
</dbReference>
<dbReference type="HOGENOM" id="CLU_045663_0_0_6"/>
<dbReference type="OrthoDB" id="9765600at2"/>
<dbReference type="UniPathway" id="UPA00145">
    <property type="reaction ID" value="UER00565"/>
</dbReference>
<dbReference type="Proteomes" id="UP000002589">
    <property type="component" value="Chromosome"/>
</dbReference>
<dbReference type="GO" id="GO:0005829">
    <property type="term" value="C:cytosol"/>
    <property type="evidence" value="ECO:0007669"/>
    <property type="project" value="TreeGrafter"/>
</dbReference>
<dbReference type="GO" id="GO:0008733">
    <property type="term" value="F:L-arabinose isomerase activity"/>
    <property type="evidence" value="ECO:0007669"/>
    <property type="project" value="UniProtKB-UniRule"/>
</dbReference>
<dbReference type="GO" id="GO:0030145">
    <property type="term" value="F:manganese ion binding"/>
    <property type="evidence" value="ECO:0007669"/>
    <property type="project" value="UniProtKB-UniRule"/>
</dbReference>
<dbReference type="GO" id="GO:0019569">
    <property type="term" value="P:L-arabinose catabolic process to xylulose 5-phosphate"/>
    <property type="evidence" value="ECO:0007669"/>
    <property type="project" value="UniProtKB-UniRule"/>
</dbReference>
<dbReference type="CDD" id="cd03557">
    <property type="entry name" value="L-arabinose_isomerase"/>
    <property type="match status" value="1"/>
</dbReference>
<dbReference type="Gene3D" id="3.40.50.10940">
    <property type="match status" value="1"/>
</dbReference>
<dbReference type="HAMAP" id="MF_00519">
    <property type="entry name" value="Arabinose_Isome"/>
    <property type="match status" value="1"/>
</dbReference>
<dbReference type="InterPro" id="IPR024664">
    <property type="entry name" value="Ara_Isoase_C"/>
</dbReference>
<dbReference type="InterPro" id="IPR055390">
    <property type="entry name" value="AraA_central"/>
</dbReference>
<dbReference type="InterPro" id="IPR055389">
    <property type="entry name" value="AraA_N"/>
</dbReference>
<dbReference type="InterPro" id="IPR038583">
    <property type="entry name" value="AraA_N_sf"/>
</dbReference>
<dbReference type="InterPro" id="IPR004216">
    <property type="entry name" value="Fuc/Ara_isomerase_C"/>
</dbReference>
<dbReference type="InterPro" id="IPR009015">
    <property type="entry name" value="Fucose_isomerase_N/cen_sf"/>
</dbReference>
<dbReference type="InterPro" id="IPR003762">
    <property type="entry name" value="Lara_isomerase"/>
</dbReference>
<dbReference type="NCBIfam" id="NF002795">
    <property type="entry name" value="PRK02929.1"/>
    <property type="match status" value="1"/>
</dbReference>
<dbReference type="PANTHER" id="PTHR38464">
    <property type="entry name" value="L-ARABINOSE ISOMERASE"/>
    <property type="match status" value="1"/>
</dbReference>
<dbReference type="PANTHER" id="PTHR38464:SF1">
    <property type="entry name" value="L-ARABINOSE ISOMERASE"/>
    <property type="match status" value="1"/>
</dbReference>
<dbReference type="Pfam" id="PF24856">
    <property type="entry name" value="AraA_central"/>
    <property type="match status" value="1"/>
</dbReference>
<dbReference type="Pfam" id="PF02610">
    <property type="entry name" value="AraA_N"/>
    <property type="match status" value="1"/>
</dbReference>
<dbReference type="Pfam" id="PF11762">
    <property type="entry name" value="Arabinose_Iso_C"/>
    <property type="match status" value="1"/>
</dbReference>
<dbReference type="PIRSF" id="PIRSF001478">
    <property type="entry name" value="L-ara_isomerase"/>
    <property type="match status" value="1"/>
</dbReference>
<dbReference type="SUPFAM" id="SSF50443">
    <property type="entry name" value="FucI/AraA C-terminal domain-like"/>
    <property type="match status" value="1"/>
</dbReference>
<dbReference type="SUPFAM" id="SSF53743">
    <property type="entry name" value="FucI/AraA N-terminal and middle domains"/>
    <property type="match status" value="1"/>
</dbReference>
<sequence>MKAFKQKQVWFITGSQDLYGPKVLEQVAKNSEQIVHGFNESSAISIEVVYKPTVKSPREIHAVCQAANSDENCVGVILWMHTFSPAKMWIAGLNELSKPFMHLHTQFNAELPWSEINMNYMNTHQSAHGCREFGFIGTRMRKERKVVVGHWQSSDVQAQIDDWCRAAAGWHESQNLRIARFGDNMRQVAVTEGDKVAAQIQFGYEVHAYSLGELNEAIADIAEGDVTAQLDRYASEYQVGNELFGDEYQLDRLRKEAKIELGLTQFLTQGGFGAFTNCFENLTGMTGLPGLATQRLMANGFGYGGEGDWKTAAMVRIMKVMGQGRAGGTSFMEDYTYNFGATDQVLGAHMLEVCPSIAAAKPRLEVHRHTIGVRCDVPRLLFTGKAGPAINVSTIDLGNRFRIILNELDTVTPPQDLPNLPVASALWEPRPNLAVAAAAWIHAGGAHHSAYSQAITTDQIVDFAEMAGAELVIIDADTKIREFKNELRQNSVYYGLARGL</sequence>
<name>ARAA_SHESA</name>
<evidence type="ECO:0000255" key="1">
    <source>
        <dbReference type="HAMAP-Rule" id="MF_00519"/>
    </source>
</evidence>
<keyword id="KW-0054">Arabinose catabolism</keyword>
<keyword id="KW-0119">Carbohydrate metabolism</keyword>
<keyword id="KW-0413">Isomerase</keyword>
<keyword id="KW-0464">Manganese</keyword>
<keyword id="KW-0479">Metal-binding</keyword>
<comment type="function">
    <text evidence="1">Catalyzes the conversion of L-arabinose to L-ribulose.</text>
</comment>
<comment type="catalytic activity">
    <reaction evidence="1">
        <text>beta-L-arabinopyranose = L-ribulose</text>
        <dbReference type="Rhea" id="RHEA:14821"/>
        <dbReference type="ChEBI" id="CHEBI:16880"/>
        <dbReference type="ChEBI" id="CHEBI:40886"/>
        <dbReference type="EC" id="5.3.1.4"/>
    </reaction>
</comment>
<comment type="cofactor">
    <cofactor evidence="1">
        <name>Mn(2+)</name>
        <dbReference type="ChEBI" id="CHEBI:29035"/>
    </cofactor>
    <text evidence="1">Binds 1 Mn(2+) ion per subunit.</text>
</comment>
<comment type="pathway">
    <text evidence="1">Carbohydrate degradation; L-arabinose degradation via L-ribulose; D-xylulose 5-phosphate from L-arabinose (bacterial route): step 1/3.</text>
</comment>
<comment type="similarity">
    <text evidence="1">Belongs to the arabinose isomerase family.</text>
</comment>
<feature type="chain" id="PRO_0000312617" description="L-arabinose isomerase">
    <location>
        <begin position="1"/>
        <end position="500"/>
    </location>
</feature>
<feature type="binding site" evidence="1">
    <location>
        <position position="306"/>
    </location>
    <ligand>
        <name>Mn(2+)</name>
        <dbReference type="ChEBI" id="CHEBI:29035"/>
    </ligand>
</feature>
<feature type="binding site" evidence="1">
    <location>
        <position position="333"/>
    </location>
    <ligand>
        <name>Mn(2+)</name>
        <dbReference type="ChEBI" id="CHEBI:29035"/>
    </ligand>
</feature>
<feature type="binding site" evidence="1">
    <location>
        <position position="349"/>
    </location>
    <ligand>
        <name>Mn(2+)</name>
        <dbReference type="ChEBI" id="CHEBI:29035"/>
    </ligand>
</feature>
<feature type="binding site" evidence="1">
    <location>
        <position position="448"/>
    </location>
    <ligand>
        <name>Mn(2+)</name>
        <dbReference type="ChEBI" id="CHEBI:29035"/>
    </ligand>
</feature>
<proteinExistence type="inferred from homology"/>